<dbReference type="EC" id="1.4.3.5" evidence="3"/>
<dbReference type="EMBL" id="U91561">
    <property type="protein sequence ID" value="AAC23707.1"/>
    <property type="molecule type" value="mRNA"/>
</dbReference>
<dbReference type="EMBL" id="BC087016">
    <property type="protein sequence ID" value="AAH87016.1"/>
    <property type="molecule type" value="mRNA"/>
</dbReference>
<dbReference type="RefSeq" id="NP_072123.1">
    <property type="nucleotide sequence ID" value="NM_022601.4"/>
</dbReference>
<dbReference type="SMR" id="O88794"/>
<dbReference type="FunCoup" id="O88794">
    <property type="interactions" value="1949"/>
</dbReference>
<dbReference type="STRING" id="10116.ENSRNOP00000067069"/>
<dbReference type="iPTMnet" id="O88794"/>
<dbReference type="PhosphoSitePlus" id="O88794"/>
<dbReference type="SwissPalm" id="O88794"/>
<dbReference type="jPOST" id="O88794"/>
<dbReference type="PaxDb" id="10116-ENSRNOP00000067069"/>
<dbReference type="Ensembl" id="ENSRNOT00000073746.2">
    <property type="protein sequence ID" value="ENSRNOP00000067069.1"/>
    <property type="gene ID" value="ENSRNOG00000046493.2"/>
</dbReference>
<dbReference type="GeneID" id="64533"/>
<dbReference type="KEGG" id="rno:64533"/>
<dbReference type="AGR" id="RGD:621456"/>
<dbReference type="CTD" id="55163"/>
<dbReference type="RGD" id="621456">
    <property type="gene designation" value="Pnpo"/>
</dbReference>
<dbReference type="eggNOG" id="KOG2586">
    <property type="taxonomic scope" value="Eukaryota"/>
</dbReference>
<dbReference type="GeneTree" id="ENSGT00390000011219"/>
<dbReference type="HOGENOM" id="CLU_032263_2_1_1"/>
<dbReference type="InParanoid" id="O88794"/>
<dbReference type="OMA" id="AYFRTRP"/>
<dbReference type="OrthoDB" id="303614at2759"/>
<dbReference type="PhylomeDB" id="O88794"/>
<dbReference type="Reactome" id="R-RNO-964975">
    <property type="pathway name" value="Vitamin B6 activation to pyridoxal phosphate"/>
</dbReference>
<dbReference type="UniPathway" id="UPA01068">
    <property type="reaction ID" value="UER00304"/>
</dbReference>
<dbReference type="UniPathway" id="UPA01068">
    <property type="reaction ID" value="UER00305"/>
</dbReference>
<dbReference type="PRO" id="PR:O88794"/>
<dbReference type="Proteomes" id="UP000002494">
    <property type="component" value="Chromosome 10"/>
</dbReference>
<dbReference type="Bgee" id="ENSRNOG00000046493">
    <property type="expression patterns" value="Expressed in heart and 19 other cell types or tissues"/>
</dbReference>
<dbReference type="GO" id="GO:0005829">
    <property type="term" value="C:cytosol"/>
    <property type="evidence" value="ECO:0000266"/>
    <property type="project" value="RGD"/>
</dbReference>
<dbReference type="GO" id="GO:0010181">
    <property type="term" value="F:FMN binding"/>
    <property type="evidence" value="ECO:0000266"/>
    <property type="project" value="RGD"/>
</dbReference>
<dbReference type="GO" id="GO:0042803">
    <property type="term" value="F:protein homodimerization activity"/>
    <property type="evidence" value="ECO:0000266"/>
    <property type="project" value="RGD"/>
</dbReference>
<dbReference type="GO" id="GO:0030170">
    <property type="term" value="F:pyridoxal phosphate binding"/>
    <property type="evidence" value="ECO:0000266"/>
    <property type="project" value="RGD"/>
</dbReference>
<dbReference type="GO" id="GO:0004733">
    <property type="term" value="F:pyridoxamine phosphate oxidase activity"/>
    <property type="evidence" value="ECO:0000314"/>
    <property type="project" value="RGD"/>
</dbReference>
<dbReference type="GO" id="GO:0042823">
    <property type="term" value="P:pyridoxal phosphate biosynthetic process"/>
    <property type="evidence" value="ECO:0000266"/>
    <property type="project" value="RGD"/>
</dbReference>
<dbReference type="GO" id="GO:0042822">
    <property type="term" value="P:pyridoxal phosphate metabolic process"/>
    <property type="evidence" value="ECO:0000266"/>
    <property type="project" value="RGD"/>
</dbReference>
<dbReference type="GO" id="GO:0042818">
    <property type="term" value="P:pyridoxamine metabolic process"/>
    <property type="evidence" value="ECO:0000266"/>
    <property type="project" value="RGD"/>
</dbReference>
<dbReference type="GO" id="GO:0008615">
    <property type="term" value="P:pyridoxine biosynthetic process"/>
    <property type="evidence" value="ECO:0007669"/>
    <property type="project" value="UniProtKB-KW"/>
</dbReference>
<dbReference type="FunFam" id="2.30.110.10:FF:000020">
    <property type="entry name" value="PNPO isoform 11"/>
    <property type="match status" value="1"/>
</dbReference>
<dbReference type="Gene3D" id="2.30.110.10">
    <property type="entry name" value="Electron Transport, Fmn-binding Protein, Chain A"/>
    <property type="match status" value="1"/>
</dbReference>
<dbReference type="HAMAP" id="MF_01629">
    <property type="entry name" value="PdxH"/>
    <property type="match status" value="1"/>
</dbReference>
<dbReference type="InterPro" id="IPR000659">
    <property type="entry name" value="Pyridox_Oxase"/>
</dbReference>
<dbReference type="InterPro" id="IPR019740">
    <property type="entry name" value="Pyridox_Oxase_CS"/>
</dbReference>
<dbReference type="InterPro" id="IPR011576">
    <property type="entry name" value="Pyridox_Oxase_N"/>
</dbReference>
<dbReference type="InterPro" id="IPR019576">
    <property type="entry name" value="Pyridoxamine_oxidase_dimer_C"/>
</dbReference>
<dbReference type="InterPro" id="IPR012349">
    <property type="entry name" value="Split_barrel_FMN-bd"/>
</dbReference>
<dbReference type="NCBIfam" id="TIGR00558">
    <property type="entry name" value="pdxH"/>
    <property type="match status" value="1"/>
</dbReference>
<dbReference type="NCBIfam" id="NF004231">
    <property type="entry name" value="PRK05679.1"/>
    <property type="match status" value="1"/>
</dbReference>
<dbReference type="PANTHER" id="PTHR10851:SF0">
    <property type="entry name" value="PYRIDOXINE-5'-PHOSPHATE OXIDASE"/>
    <property type="match status" value="1"/>
</dbReference>
<dbReference type="PANTHER" id="PTHR10851">
    <property type="entry name" value="PYRIDOXINE-5-PHOSPHATE OXIDASE"/>
    <property type="match status" value="1"/>
</dbReference>
<dbReference type="Pfam" id="PF10590">
    <property type="entry name" value="PNP_phzG_C"/>
    <property type="match status" value="1"/>
</dbReference>
<dbReference type="Pfam" id="PF01243">
    <property type="entry name" value="PNPOx_N"/>
    <property type="match status" value="1"/>
</dbReference>
<dbReference type="PIRSF" id="PIRSF000190">
    <property type="entry name" value="Pyd_amn-ph_oxd"/>
    <property type="match status" value="1"/>
</dbReference>
<dbReference type="SUPFAM" id="SSF50475">
    <property type="entry name" value="FMN-binding split barrel"/>
    <property type="match status" value="1"/>
</dbReference>
<dbReference type="PROSITE" id="PS01064">
    <property type="entry name" value="PYRIDOX_OXIDASE"/>
    <property type="match status" value="1"/>
</dbReference>
<protein>
    <recommendedName>
        <fullName>Pyridoxine-5'-phosphate oxidase</fullName>
        <ecNumber evidence="3">1.4.3.5</ecNumber>
    </recommendedName>
    <alternativeName>
        <fullName>Pyridoxamine-phosphate oxidase</fullName>
    </alternativeName>
</protein>
<organism>
    <name type="scientific">Rattus norvegicus</name>
    <name type="common">Rat</name>
    <dbReference type="NCBI Taxonomy" id="10116"/>
    <lineage>
        <taxon>Eukaryota</taxon>
        <taxon>Metazoa</taxon>
        <taxon>Chordata</taxon>
        <taxon>Craniata</taxon>
        <taxon>Vertebrata</taxon>
        <taxon>Euteleostomi</taxon>
        <taxon>Mammalia</taxon>
        <taxon>Eutheria</taxon>
        <taxon>Euarchontoglires</taxon>
        <taxon>Glires</taxon>
        <taxon>Rodentia</taxon>
        <taxon>Myomorpha</taxon>
        <taxon>Muroidea</taxon>
        <taxon>Muridae</taxon>
        <taxon>Murinae</taxon>
        <taxon>Rattus</taxon>
    </lineage>
</organism>
<feature type="chain" id="PRO_0000167785" description="Pyridoxine-5'-phosphate oxidase">
    <location>
        <begin position="1"/>
        <end position="261"/>
    </location>
</feature>
<feature type="binding site" evidence="1">
    <location>
        <begin position="42"/>
        <end position="45"/>
    </location>
    <ligand>
        <name>pyridoxal 5'-phosphate</name>
        <dbReference type="ChEBI" id="CHEBI:597326"/>
    </ligand>
</feature>
<feature type="binding site" evidence="2">
    <location>
        <begin position="95"/>
        <end position="98"/>
    </location>
    <ligand>
        <name>FMN</name>
        <dbReference type="ChEBI" id="CHEBI:58210"/>
    </ligand>
</feature>
<feature type="binding site" evidence="2">
    <location>
        <position position="100"/>
    </location>
    <ligand>
        <name>pyridoxal 5'-phosphate</name>
        <dbReference type="ChEBI" id="CHEBI:597326"/>
    </ligand>
</feature>
<feature type="binding site" evidence="2">
    <location>
        <begin position="110"/>
        <end position="111"/>
    </location>
    <ligand>
        <name>FMN</name>
        <dbReference type="ChEBI" id="CHEBI:58210"/>
    </ligand>
</feature>
<feature type="binding site" evidence="2">
    <location>
        <begin position="116"/>
        <end position="117"/>
    </location>
    <ligand>
        <name>FMN</name>
        <dbReference type="ChEBI" id="CHEBI:58210"/>
    </ligand>
</feature>
<feature type="binding site" evidence="1">
    <location>
        <position position="139"/>
    </location>
    <ligand>
        <name>FMN</name>
        <dbReference type="ChEBI" id="CHEBI:58210"/>
    </ligand>
</feature>
<feature type="binding site" evidence="2">
    <location>
        <position position="157"/>
    </location>
    <ligand>
        <name>pyridoxal 5'-phosphate</name>
        <dbReference type="ChEBI" id="CHEBI:597326"/>
    </ligand>
</feature>
<feature type="binding site" evidence="2">
    <location>
        <position position="161"/>
    </location>
    <ligand>
        <name>pyridoxal 5'-phosphate</name>
        <dbReference type="ChEBI" id="CHEBI:597326"/>
    </ligand>
</feature>
<feature type="binding site" evidence="2">
    <location>
        <position position="165"/>
    </location>
    <ligand>
        <name>pyridoxal 5'-phosphate</name>
        <dbReference type="ChEBI" id="CHEBI:597326"/>
    </ligand>
</feature>
<feature type="binding site" evidence="2">
    <location>
        <begin position="174"/>
        <end position="175"/>
    </location>
    <ligand>
        <name>FMN</name>
        <dbReference type="ChEBI" id="CHEBI:58210"/>
    </ligand>
</feature>
<feature type="binding site" evidence="1">
    <location>
        <position position="219"/>
    </location>
    <ligand>
        <name>FMN</name>
        <dbReference type="ChEBI" id="CHEBI:58210"/>
    </ligand>
</feature>
<feature type="binding site" evidence="1">
    <location>
        <begin position="225"/>
        <end position="227"/>
    </location>
    <ligand>
        <name>pyridoxal 5'-phosphate</name>
        <dbReference type="ChEBI" id="CHEBI:597326"/>
    </ligand>
</feature>
<feature type="binding site" evidence="1">
    <location>
        <position position="229"/>
    </location>
    <ligand>
        <name>FMN</name>
        <dbReference type="ChEBI" id="CHEBI:58210"/>
    </ligand>
</feature>
<feature type="modified residue" description="Phosphothreonine" evidence="2">
    <location>
        <position position="238"/>
    </location>
</feature>
<feature type="modified residue" description="Phosphoserine" evidence="6">
    <location>
        <position position="241"/>
    </location>
</feature>
<evidence type="ECO:0000250" key="1">
    <source>
        <dbReference type="UniProtKB" id="P0AFI7"/>
    </source>
</evidence>
<evidence type="ECO:0000250" key="2">
    <source>
        <dbReference type="UniProtKB" id="Q9NVS9"/>
    </source>
</evidence>
<evidence type="ECO:0000269" key="3">
    <source>
    </source>
</evidence>
<evidence type="ECO:0000305" key="4"/>
<evidence type="ECO:0000305" key="5">
    <source>
    </source>
</evidence>
<evidence type="ECO:0007744" key="6">
    <source>
    </source>
</evidence>
<keyword id="KW-0903">Direct protein sequencing</keyword>
<keyword id="KW-0285">Flavoprotein</keyword>
<keyword id="KW-0288">FMN</keyword>
<keyword id="KW-0560">Oxidoreductase</keyword>
<keyword id="KW-0597">Phosphoprotein</keyword>
<keyword id="KW-0663">Pyridoxal phosphate</keyword>
<keyword id="KW-0664">Pyridoxine biosynthesis</keyword>
<keyword id="KW-1185">Reference proteome</keyword>
<comment type="function">
    <text evidence="3">Catalyzes the oxidation of either pyridoxine 5'-phosphate (PNP) or pyridoxamine 5'-phosphate (PMP) into pyridoxal 5'-phosphate (PLP).</text>
</comment>
<comment type="catalytic activity">
    <reaction evidence="5">
        <text>pyridoxamine 5'-phosphate + O2 + H2O = pyridoxal 5'-phosphate + H2O2 + NH4(+)</text>
        <dbReference type="Rhea" id="RHEA:15817"/>
        <dbReference type="ChEBI" id="CHEBI:15377"/>
        <dbReference type="ChEBI" id="CHEBI:15379"/>
        <dbReference type="ChEBI" id="CHEBI:16240"/>
        <dbReference type="ChEBI" id="CHEBI:28938"/>
        <dbReference type="ChEBI" id="CHEBI:58451"/>
        <dbReference type="ChEBI" id="CHEBI:597326"/>
        <dbReference type="EC" id="1.4.3.5"/>
    </reaction>
    <physiologicalReaction direction="left-to-right" evidence="5">
        <dbReference type="Rhea" id="RHEA:15818"/>
    </physiologicalReaction>
</comment>
<comment type="catalytic activity">
    <reaction evidence="3">
        <text>pyridoxine 5'-phosphate + O2 = pyridoxal 5'-phosphate + H2O2</text>
        <dbReference type="Rhea" id="RHEA:15149"/>
        <dbReference type="ChEBI" id="CHEBI:15379"/>
        <dbReference type="ChEBI" id="CHEBI:16240"/>
        <dbReference type="ChEBI" id="CHEBI:58589"/>
        <dbReference type="ChEBI" id="CHEBI:597326"/>
        <dbReference type="EC" id="1.4.3.5"/>
    </reaction>
    <physiologicalReaction direction="left-to-right" evidence="5">
        <dbReference type="Rhea" id="RHEA:15150"/>
    </physiologicalReaction>
</comment>
<comment type="cofactor">
    <cofactor evidence="2">
        <name>FMN</name>
        <dbReference type="ChEBI" id="CHEBI:58210"/>
    </cofactor>
    <text evidence="2">Binds 1 FMN per subunit.</text>
</comment>
<comment type="pathway">
    <text evidence="5">Cofactor metabolism; pyridoxal 5'-phosphate salvage; pyridoxal 5'-phosphate from pyridoxamine 5'-phosphate: step 1/1.</text>
</comment>
<comment type="pathway">
    <text evidence="5">Cofactor metabolism; pyridoxal 5'-phosphate salvage; pyridoxal 5'-phosphate from pyridoxine 5'-phosphate: step 1/1.</text>
</comment>
<comment type="subunit">
    <text evidence="2">Homodimer.</text>
</comment>
<comment type="tissue specificity">
    <text evidence="3">Detected in adult liver.</text>
</comment>
<comment type="developmental stage">
    <text evidence="3">Detected at low levels in fetal brain, and at high levels in adult brain.</text>
</comment>
<comment type="similarity">
    <text evidence="4">Belongs to the pyridoxamine 5'-phosphate oxidase family.</text>
</comment>
<name>PNPO_RAT</name>
<reference key="1">
    <citation type="journal article" date="1998" name="Biochemistry">
        <title>Absence of pyridoxine-5'-phosphate oxidase (PNPO) activity in neoplastic cells: isolation, characterization, and expression of PNPO cDNA.</title>
        <authorList>
            <person name="Ngo E.O."/>
            <person name="LePage G.R."/>
            <person name="Thanassi J.W."/>
            <person name="Meisler N."/>
            <person name="Nutter L.M."/>
        </authorList>
    </citation>
    <scope>NUCLEOTIDE SEQUENCE [MRNA]</scope>
    <scope>PARTIAL PROTEIN SEQUENCE</scope>
    <scope>FUNCTION</scope>
    <scope>CATALYTIC ACTIVITY</scope>
    <scope>PATHWAY</scope>
    <scope>DEVELOPMENTAL STAGE</scope>
    <scope>TISSUE SPECIFICITY</scope>
    <source>
        <strain>Sprague-Dawley</strain>
        <tissue>Liver</tissue>
    </source>
</reference>
<reference key="2">
    <citation type="journal article" date="2004" name="Genome Res.">
        <title>The status, quality, and expansion of the NIH full-length cDNA project: the Mammalian Gene Collection (MGC).</title>
        <authorList>
            <consortium name="The MGC Project Team"/>
        </authorList>
    </citation>
    <scope>NUCLEOTIDE SEQUENCE [LARGE SCALE MRNA]</scope>
    <source>
        <tissue>Kidney</tissue>
    </source>
</reference>
<reference key="3">
    <citation type="submission" date="2007-04" db="UniProtKB">
        <authorList>
            <person name="Lubec G."/>
            <person name="Afjehi-Sadat L."/>
            <person name="Chen W.-Q."/>
        </authorList>
    </citation>
    <scope>PROTEIN SEQUENCE OF 109-116; 164-181 AND 188-196</scope>
    <scope>IDENTIFICATION BY MASS SPECTROMETRY</scope>
    <source>
        <strain>Sprague-Dawley</strain>
        <tissue>Hippocampus</tissue>
        <tissue>Spinal cord</tissue>
    </source>
</reference>
<reference key="4">
    <citation type="journal article" date="2012" name="Nat. Commun.">
        <title>Quantitative maps of protein phosphorylation sites across 14 different rat organs and tissues.</title>
        <authorList>
            <person name="Lundby A."/>
            <person name="Secher A."/>
            <person name="Lage K."/>
            <person name="Nordsborg N.B."/>
            <person name="Dmytriyev A."/>
            <person name="Lundby C."/>
            <person name="Olsen J.V."/>
        </authorList>
    </citation>
    <scope>PHOSPHORYLATION [LARGE SCALE ANALYSIS] AT SER-241</scope>
    <scope>IDENTIFICATION BY MASS SPECTROMETRY [LARGE SCALE ANALYSIS]</scope>
</reference>
<sequence>MTCGLLSVTVTFRRPAKWPGYFRHLCCRGAVMDLGPMRKSYRGDREAFEEAHLTSLDPMKQFASWFEEAVQCPDIGEANAMCLATCTRDGKPSARMLLLKGFGKDGFRFFTNYESRKGKELDSNPFASLVFYWEPLNRQVRVEGPVKKLPEKEAENYFHSRPKSSQIGAVVSRQSSVIPDREYLRKKNEELGQLYREQEVPKPEYWGGYILYPQVMEFWQGQTNRLHDRIVFRRGLATGDSPLGPMTHHGEEDWVYERLAP</sequence>
<accession>O88794</accession>
<proteinExistence type="evidence at protein level"/>
<gene>
    <name type="primary">Pnpo</name>
</gene>